<dbReference type="EC" id="4.2.1.20" evidence="1"/>
<dbReference type="EMBL" id="CP001139">
    <property type="protein sequence ID" value="ACH66717.1"/>
    <property type="molecule type" value="Genomic_DNA"/>
</dbReference>
<dbReference type="RefSeq" id="WP_012533929.1">
    <property type="nucleotide sequence ID" value="NC_011184.1"/>
</dbReference>
<dbReference type="SMR" id="B5FDB7"/>
<dbReference type="KEGG" id="vfm:VFMJ11_1111"/>
<dbReference type="HOGENOM" id="CLU_016734_3_1_6"/>
<dbReference type="UniPathway" id="UPA00035">
    <property type="reaction ID" value="UER00044"/>
</dbReference>
<dbReference type="Proteomes" id="UP000001857">
    <property type="component" value="Chromosome I"/>
</dbReference>
<dbReference type="GO" id="GO:0005737">
    <property type="term" value="C:cytoplasm"/>
    <property type="evidence" value="ECO:0007669"/>
    <property type="project" value="TreeGrafter"/>
</dbReference>
<dbReference type="GO" id="GO:0004834">
    <property type="term" value="F:tryptophan synthase activity"/>
    <property type="evidence" value="ECO:0007669"/>
    <property type="project" value="UniProtKB-UniRule"/>
</dbReference>
<dbReference type="CDD" id="cd06446">
    <property type="entry name" value="Trp-synth_B"/>
    <property type="match status" value="1"/>
</dbReference>
<dbReference type="FunFam" id="3.40.50.1100:FF:000001">
    <property type="entry name" value="Tryptophan synthase beta chain"/>
    <property type="match status" value="1"/>
</dbReference>
<dbReference type="FunFam" id="3.40.50.1100:FF:000004">
    <property type="entry name" value="Tryptophan synthase beta chain"/>
    <property type="match status" value="1"/>
</dbReference>
<dbReference type="Gene3D" id="3.40.50.1100">
    <property type="match status" value="2"/>
</dbReference>
<dbReference type="HAMAP" id="MF_00133">
    <property type="entry name" value="Trp_synth_beta"/>
    <property type="match status" value="1"/>
</dbReference>
<dbReference type="InterPro" id="IPR006653">
    <property type="entry name" value="Trp_synth_b_CS"/>
</dbReference>
<dbReference type="InterPro" id="IPR006654">
    <property type="entry name" value="Trp_synth_beta"/>
</dbReference>
<dbReference type="InterPro" id="IPR023026">
    <property type="entry name" value="Trp_synth_beta/beta-like"/>
</dbReference>
<dbReference type="InterPro" id="IPR001926">
    <property type="entry name" value="TrpB-like_PALP"/>
</dbReference>
<dbReference type="InterPro" id="IPR036052">
    <property type="entry name" value="TrpB-like_PALP_sf"/>
</dbReference>
<dbReference type="NCBIfam" id="TIGR00263">
    <property type="entry name" value="trpB"/>
    <property type="match status" value="1"/>
</dbReference>
<dbReference type="PANTHER" id="PTHR48077:SF3">
    <property type="entry name" value="TRYPTOPHAN SYNTHASE"/>
    <property type="match status" value="1"/>
</dbReference>
<dbReference type="PANTHER" id="PTHR48077">
    <property type="entry name" value="TRYPTOPHAN SYNTHASE-RELATED"/>
    <property type="match status" value="1"/>
</dbReference>
<dbReference type="Pfam" id="PF00291">
    <property type="entry name" value="PALP"/>
    <property type="match status" value="1"/>
</dbReference>
<dbReference type="PIRSF" id="PIRSF001413">
    <property type="entry name" value="Trp_syn_beta"/>
    <property type="match status" value="1"/>
</dbReference>
<dbReference type="SUPFAM" id="SSF53686">
    <property type="entry name" value="Tryptophan synthase beta subunit-like PLP-dependent enzymes"/>
    <property type="match status" value="1"/>
</dbReference>
<dbReference type="PROSITE" id="PS00168">
    <property type="entry name" value="TRP_SYNTHASE_BETA"/>
    <property type="match status" value="1"/>
</dbReference>
<organism>
    <name type="scientific">Aliivibrio fischeri (strain MJ11)</name>
    <name type="common">Vibrio fischeri</name>
    <dbReference type="NCBI Taxonomy" id="388396"/>
    <lineage>
        <taxon>Bacteria</taxon>
        <taxon>Pseudomonadati</taxon>
        <taxon>Pseudomonadota</taxon>
        <taxon>Gammaproteobacteria</taxon>
        <taxon>Vibrionales</taxon>
        <taxon>Vibrionaceae</taxon>
        <taxon>Aliivibrio</taxon>
    </lineage>
</organism>
<evidence type="ECO:0000255" key="1">
    <source>
        <dbReference type="HAMAP-Rule" id="MF_00133"/>
    </source>
</evidence>
<proteinExistence type="inferred from homology"/>
<comment type="function">
    <text evidence="1">The beta subunit is responsible for the synthesis of L-tryptophan from indole and L-serine.</text>
</comment>
<comment type="catalytic activity">
    <reaction evidence="1">
        <text>(1S,2R)-1-C-(indol-3-yl)glycerol 3-phosphate + L-serine = D-glyceraldehyde 3-phosphate + L-tryptophan + H2O</text>
        <dbReference type="Rhea" id="RHEA:10532"/>
        <dbReference type="ChEBI" id="CHEBI:15377"/>
        <dbReference type="ChEBI" id="CHEBI:33384"/>
        <dbReference type="ChEBI" id="CHEBI:57912"/>
        <dbReference type="ChEBI" id="CHEBI:58866"/>
        <dbReference type="ChEBI" id="CHEBI:59776"/>
        <dbReference type="EC" id="4.2.1.20"/>
    </reaction>
</comment>
<comment type="cofactor">
    <cofactor evidence="1">
        <name>pyridoxal 5'-phosphate</name>
        <dbReference type="ChEBI" id="CHEBI:597326"/>
    </cofactor>
</comment>
<comment type="pathway">
    <text evidence="1">Amino-acid biosynthesis; L-tryptophan biosynthesis; L-tryptophan from chorismate: step 5/5.</text>
</comment>
<comment type="subunit">
    <text evidence="1">Tetramer of two alpha and two beta chains.</text>
</comment>
<comment type="similarity">
    <text evidence="1">Belongs to the TrpB family.</text>
</comment>
<keyword id="KW-0028">Amino-acid biosynthesis</keyword>
<keyword id="KW-0057">Aromatic amino acid biosynthesis</keyword>
<keyword id="KW-0456">Lyase</keyword>
<keyword id="KW-0663">Pyridoxal phosphate</keyword>
<keyword id="KW-0822">Tryptophan biosynthesis</keyword>
<feature type="chain" id="PRO_1000095836" description="Tryptophan synthase beta chain">
    <location>
        <begin position="1"/>
        <end position="396"/>
    </location>
</feature>
<feature type="modified residue" description="N6-(pyridoxal phosphate)lysine" evidence="1">
    <location>
        <position position="86"/>
    </location>
</feature>
<name>TRPB_ALIFM</name>
<protein>
    <recommendedName>
        <fullName evidence="1">Tryptophan synthase beta chain</fullName>
        <ecNumber evidence="1">4.2.1.20</ecNumber>
    </recommendedName>
</protein>
<sequence length="396" mass="42911">MAKLDAYFGEYGGQYVPQILVPALEQLEQAFIDAQEDPDFRAEFMTLLQEYAGRPTALTLCRNLTKGTKTKLYLKREDLLHGGAHKTNQVLGQALLAKRMGKDEIIAETGAGQHGVATALACALLGLKCRVYMGAKDVERQSPNVFRMELMGAEVIPVHSGSATLKDACNEALRDWSATYETAHYLLGTAAGPHPFPTIVREFQRMIGEETKMQILAREGRLPDAVIACVGGGSNAIGMFADFIEEESVKLIGVEPAGKGIDTDQHGAPLKHGKTGIFFGMKAPLMQDEHGQIEESYSVSAGLDFPSVGPQHAHLNAIGRAEYGAVTDDEALEAFKILARNEGIIPALESSHALAYALQLAQAEPEKEQLLVVNLSGRGDKDIFTVHDILKEKGEI</sequence>
<accession>B5FDB7</accession>
<reference key="1">
    <citation type="submission" date="2008-08" db="EMBL/GenBank/DDBJ databases">
        <title>Complete sequence of Vibrio fischeri strain MJ11.</title>
        <authorList>
            <person name="Mandel M.J."/>
            <person name="Stabb E.V."/>
            <person name="Ruby E.G."/>
            <person name="Ferriera S."/>
            <person name="Johnson J."/>
            <person name="Kravitz S."/>
            <person name="Beeson K."/>
            <person name="Sutton G."/>
            <person name="Rogers Y.-H."/>
            <person name="Friedman R."/>
            <person name="Frazier M."/>
            <person name="Venter J.C."/>
        </authorList>
    </citation>
    <scope>NUCLEOTIDE SEQUENCE [LARGE SCALE GENOMIC DNA]</scope>
    <source>
        <strain>MJ11</strain>
    </source>
</reference>
<gene>
    <name evidence="1" type="primary">trpB</name>
    <name type="ordered locus">VFMJ11_1111</name>
</gene>